<accession>B2I7V6</accession>
<reference key="1">
    <citation type="journal article" date="2010" name="J. Bacteriol.">
        <title>Whole genome sequences of two Xylella fastidiosa strains (M12 and M23) causing almond leaf scorch disease in California.</title>
        <authorList>
            <person name="Chen J."/>
            <person name="Xie G."/>
            <person name="Han S."/>
            <person name="Chertkov O."/>
            <person name="Sims D."/>
            <person name="Civerolo E.L."/>
        </authorList>
    </citation>
    <scope>NUCLEOTIDE SEQUENCE [LARGE SCALE GENOMIC DNA]</scope>
    <source>
        <strain>M23</strain>
    </source>
</reference>
<gene>
    <name evidence="1" type="primary">ndk</name>
    <name type="ordered locus">XfasM23_1717</name>
</gene>
<dbReference type="EC" id="2.7.4.6" evidence="1"/>
<dbReference type="EMBL" id="CP001011">
    <property type="protein sequence ID" value="ACB93121.1"/>
    <property type="molecule type" value="Genomic_DNA"/>
</dbReference>
<dbReference type="RefSeq" id="WP_004083578.1">
    <property type="nucleotide sequence ID" value="NC_010577.1"/>
</dbReference>
<dbReference type="SMR" id="B2I7V6"/>
<dbReference type="GeneID" id="93905459"/>
<dbReference type="KEGG" id="xfn:XfasM23_1717"/>
<dbReference type="HOGENOM" id="CLU_060216_8_1_6"/>
<dbReference type="Proteomes" id="UP000001698">
    <property type="component" value="Chromosome"/>
</dbReference>
<dbReference type="GO" id="GO:0005737">
    <property type="term" value="C:cytoplasm"/>
    <property type="evidence" value="ECO:0007669"/>
    <property type="project" value="UniProtKB-SubCell"/>
</dbReference>
<dbReference type="GO" id="GO:0005524">
    <property type="term" value="F:ATP binding"/>
    <property type="evidence" value="ECO:0007669"/>
    <property type="project" value="UniProtKB-UniRule"/>
</dbReference>
<dbReference type="GO" id="GO:0046872">
    <property type="term" value="F:metal ion binding"/>
    <property type="evidence" value="ECO:0007669"/>
    <property type="project" value="UniProtKB-KW"/>
</dbReference>
<dbReference type="GO" id="GO:0004550">
    <property type="term" value="F:nucleoside diphosphate kinase activity"/>
    <property type="evidence" value="ECO:0007669"/>
    <property type="project" value="UniProtKB-UniRule"/>
</dbReference>
<dbReference type="GO" id="GO:0006241">
    <property type="term" value="P:CTP biosynthetic process"/>
    <property type="evidence" value="ECO:0007669"/>
    <property type="project" value="UniProtKB-UniRule"/>
</dbReference>
<dbReference type="GO" id="GO:0006183">
    <property type="term" value="P:GTP biosynthetic process"/>
    <property type="evidence" value="ECO:0007669"/>
    <property type="project" value="UniProtKB-UniRule"/>
</dbReference>
<dbReference type="GO" id="GO:0006228">
    <property type="term" value="P:UTP biosynthetic process"/>
    <property type="evidence" value="ECO:0007669"/>
    <property type="project" value="UniProtKB-UniRule"/>
</dbReference>
<dbReference type="CDD" id="cd04413">
    <property type="entry name" value="NDPk_I"/>
    <property type="match status" value="1"/>
</dbReference>
<dbReference type="FunFam" id="3.30.70.141:FF:000001">
    <property type="entry name" value="Nucleoside diphosphate kinase"/>
    <property type="match status" value="1"/>
</dbReference>
<dbReference type="Gene3D" id="3.30.70.141">
    <property type="entry name" value="Nucleoside diphosphate kinase-like domain"/>
    <property type="match status" value="1"/>
</dbReference>
<dbReference type="HAMAP" id="MF_00451">
    <property type="entry name" value="NDP_kinase"/>
    <property type="match status" value="1"/>
</dbReference>
<dbReference type="InterPro" id="IPR034907">
    <property type="entry name" value="NDK-like_dom"/>
</dbReference>
<dbReference type="InterPro" id="IPR036850">
    <property type="entry name" value="NDK-like_dom_sf"/>
</dbReference>
<dbReference type="InterPro" id="IPR001564">
    <property type="entry name" value="Nucleoside_diP_kinase"/>
</dbReference>
<dbReference type="InterPro" id="IPR023005">
    <property type="entry name" value="Nucleoside_diP_kinase_AS"/>
</dbReference>
<dbReference type="NCBIfam" id="NF001908">
    <property type="entry name" value="PRK00668.1"/>
    <property type="match status" value="1"/>
</dbReference>
<dbReference type="PANTHER" id="PTHR11349">
    <property type="entry name" value="NUCLEOSIDE DIPHOSPHATE KINASE"/>
    <property type="match status" value="1"/>
</dbReference>
<dbReference type="Pfam" id="PF00334">
    <property type="entry name" value="NDK"/>
    <property type="match status" value="1"/>
</dbReference>
<dbReference type="PRINTS" id="PR01243">
    <property type="entry name" value="NUCDPKINASE"/>
</dbReference>
<dbReference type="SMART" id="SM00562">
    <property type="entry name" value="NDK"/>
    <property type="match status" value="1"/>
</dbReference>
<dbReference type="SUPFAM" id="SSF54919">
    <property type="entry name" value="Nucleoside diphosphate kinase, NDK"/>
    <property type="match status" value="1"/>
</dbReference>
<dbReference type="PROSITE" id="PS00469">
    <property type="entry name" value="NDPK"/>
    <property type="match status" value="1"/>
</dbReference>
<dbReference type="PROSITE" id="PS51374">
    <property type="entry name" value="NDPK_LIKE"/>
    <property type="match status" value="1"/>
</dbReference>
<name>NDK_XYLF2</name>
<keyword id="KW-0067">ATP-binding</keyword>
<keyword id="KW-0963">Cytoplasm</keyword>
<keyword id="KW-0418">Kinase</keyword>
<keyword id="KW-0460">Magnesium</keyword>
<keyword id="KW-0479">Metal-binding</keyword>
<keyword id="KW-0546">Nucleotide metabolism</keyword>
<keyword id="KW-0547">Nucleotide-binding</keyword>
<keyword id="KW-0597">Phosphoprotein</keyword>
<keyword id="KW-0808">Transferase</keyword>
<organism>
    <name type="scientific">Xylella fastidiosa (strain M23)</name>
    <dbReference type="NCBI Taxonomy" id="405441"/>
    <lineage>
        <taxon>Bacteria</taxon>
        <taxon>Pseudomonadati</taxon>
        <taxon>Pseudomonadota</taxon>
        <taxon>Gammaproteobacteria</taxon>
        <taxon>Lysobacterales</taxon>
        <taxon>Lysobacteraceae</taxon>
        <taxon>Xylella</taxon>
    </lineage>
</organism>
<sequence length="141" mass="15510">MVLERTLSIIKPDAVAKNVIGDIYSRFEKAGLKIVAAKYKQLSRREAEGFYAVHRDRPFFNALVEFMISGPVMIQVLESENAVARHRELLGATNPKDAAPGTIRADFAESIEANAAHGSDSVENAAIEVAYFFAATEIILR</sequence>
<proteinExistence type="inferred from homology"/>
<protein>
    <recommendedName>
        <fullName evidence="1">Nucleoside diphosphate kinase</fullName>
        <shortName evidence="1">NDK</shortName>
        <shortName evidence="1">NDP kinase</shortName>
        <ecNumber evidence="1">2.7.4.6</ecNumber>
    </recommendedName>
    <alternativeName>
        <fullName evidence="1">Nucleoside-2-P kinase</fullName>
    </alternativeName>
</protein>
<evidence type="ECO:0000255" key="1">
    <source>
        <dbReference type="HAMAP-Rule" id="MF_00451"/>
    </source>
</evidence>
<comment type="function">
    <text evidence="1">Major role in the synthesis of nucleoside triphosphates other than ATP. The ATP gamma phosphate is transferred to the NDP beta phosphate via a ping-pong mechanism, using a phosphorylated active-site intermediate.</text>
</comment>
<comment type="catalytic activity">
    <reaction evidence="1">
        <text>a 2'-deoxyribonucleoside 5'-diphosphate + ATP = a 2'-deoxyribonucleoside 5'-triphosphate + ADP</text>
        <dbReference type="Rhea" id="RHEA:44640"/>
        <dbReference type="ChEBI" id="CHEBI:30616"/>
        <dbReference type="ChEBI" id="CHEBI:61560"/>
        <dbReference type="ChEBI" id="CHEBI:73316"/>
        <dbReference type="ChEBI" id="CHEBI:456216"/>
        <dbReference type="EC" id="2.7.4.6"/>
    </reaction>
</comment>
<comment type="catalytic activity">
    <reaction evidence="1">
        <text>a ribonucleoside 5'-diphosphate + ATP = a ribonucleoside 5'-triphosphate + ADP</text>
        <dbReference type="Rhea" id="RHEA:18113"/>
        <dbReference type="ChEBI" id="CHEBI:30616"/>
        <dbReference type="ChEBI" id="CHEBI:57930"/>
        <dbReference type="ChEBI" id="CHEBI:61557"/>
        <dbReference type="ChEBI" id="CHEBI:456216"/>
        <dbReference type="EC" id="2.7.4.6"/>
    </reaction>
</comment>
<comment type="cofactor">
    <cofactor evidence="1">
        <name>Mg(2+)</name>
        <dbReference type="ChEBI" id="CHEBI:18420"/>
    </cofactor>
</comment>
<comment type="subunit">
    <text evidence="1">Homotetramer.</text>
</comment>
<comment type="subcellular location">
    <subcellularLocation>
        <location evidence="1">Cytoplasm</location>
    </subcellularLocation>
</comment>
<comment type="similarity">
    <text evidence="1">Belongs to the NDK family.</text>
</comment>
<feature type="chain" id="PRO_1000125032" description="Nucleoside diphosphate kinase">
    <location>
        <begin position="1"/>
        <end position="141"/>
    </location>
</feature>
<feature type="active site" description="Pros-phosphohistidine intermediate" evidence="1">
    <location>
        <position position="117"/>
    </location>
</feature>
<feature type="binding site" evidence="1">
    <location>
        <position position="11"/>
    </location>
    <ligand>
        <name>ATP</name>
        <dbReference type="ChEBI" id="CHEBI:30616"/>
    </ligand>
</feature>
<feature type="binding site" evidence="1">
    <location>
        <position position="59"/>
    </location>
    <ligand>
        <name>ATP</name>
        <dbReference type="ChEBI" id="CHEBI:30616"/>
    </ligand>
</feature>
<feature type="binding site" evidence="1">
    <location>
        <position position="87"/>
    </location>
    <ligand>
        <name>ATP</name>
        <dbReference type="ChEBI" id="CHEBI:30616"/>
    </ligand>
</feature>
<feature type="binding site" evidence="1">
    <location>
        <position position="93"/>
    </location>
    <ligand>
        <name>ATP</name>
        <dbReference type="ChEBI" id="CHEBI:30616"/>
    </ligand>
</feature>
<feature type="binding site" evidence="1">
    <location>
        <position position="104"/>
    </location>
    <ligand>
        <name>ATP</name>
        <dbReference type="ChEBI" id="CHEBI:30616"/>
    </ligand>
</feature>
<feature type="binding site" evidence="1">
    <location>
        <position position="114"/>
    </location>
    <ligand>
        <name>ATP</name>
        <dbReference type="ChEBI" id="CHEBI:30616"/>
    </ligand>
</feature>